<organism>
    <name type="scientific">Mirza zaza</name>
    <name type="common">Northern giant mouse lemur</name>
    <name type="synonym">Microcebus zaza</name>
    <dbReference type="NCBI Taxonomy" id="339999"/>
    <lineage>
        <taxon>Eukaryota</taxon>
        <taxon>Metazoa</taxon>
        <taxon>Chordata</taxon>
        <taxon>Craniata</taxon>
        <taxon>Vertebrata</taxon>
        <taxon>Euteleostomi</taxon>
        <taxon>Mammalia</taxon>
        <taxon>Eutheria</taxon>
        <taxon>Euarchontoglires</taxon>
        <taxon>Primates</taxon>
        <taxon>Strepsirrhini</taxon>
        <taxon>Lemuriformes</taxon>
        <taxon>Cheirogaleidae</taxon>
        <taxon>Mirza</taxon>
    </lineage>
</organism>
<proteinExistence type="inferred from homology"/>
<accession>Q3YLC2</accession>
<accession>Q3YLC0</accession>
<accession>Q3YLC1</accession>
<accession>Q3YLC3</accession>
<keyword id="KW-0249">Electron transport</keyword>
<keyword id="KW-0349">Heme</keyword>
<keyword id="KW-0408">Iron</keyword>
<keyword id="KW-0472">Membrane</keyword>
<keyword id="KW-0479">Metal-binding</keyword>
<keyword id="KW-0496">Mitochondrion</keyword>
<keyword id="KW-0999">Mitochondrion inner membrane</keyword>
<keyword id="KW-0679">Respiratory chain</keyword>
<keyword id="KW-0812">Transmembrane</keyword>
<keyword id="KW-1133">Transmembrane helix</keyword>
<keyword id="KW-0813">Transport</keyword>
<keyword id="KW-0830">Ubiquinone</keyword>
<feature type="chain" id="PRO_0000257925" description="Cytochrome b">
    <location>
        <begin position="1"/>
        <end position="379"/>
    </location>
</feature>
<feature type="transmembrane region" description="Helical" evidence="2">
    <location>
        <begin position="33"/>
        <end position="53"/>
    </location>
</feature>
<feature type="transmembrane region" description="Helical" evidence="2">
    <location>
        <begin position="77"/>
        <end position="98"/>
    </location>
</feature>
<feature type="transmembrane region" description="Helical" evidence="2">
    <location>
        <begin position="113"/>
        <end position="133"/>
    </location>
</feature>
<feature type="transmembrane region" description="Helical" evidence="2">
    <location>
        <begin position="178"/>
        <end position="198"/>
    </location>
</feature>
<feature type="transmembrane region" description="Helical" evidence="2">
    <location>
        <begin position="226"/>
        <end position="246"/>
    </location>
</feature>
<feature type="transmembrane region" description="Helical" evidence="2">
    <location>
        <begin position="288"/>
        <end position="308"/>
    </location>
</feature>
<feature type="transmembrane region" description="Helical" evidence="2">
    <location>
        <begin position="320"/>
        <end position="340"/>
    </location>
</feature>
<feature type="transmembrane region" description="Helical" evidence="2">
    <location>
        <begin position="347"/>
        <end position="367"/>
    </location>
</feature>
<feature type="binding site" description="axial binding residue" evidence="2">
    <location>
        <position position="83"/>
    </location>
    <ligand>
        <name>heme b</name>
        <dbReference type="ChEBI" id="CHEBI:60344"/>
        <label>b562</label>
    </ligand>
    <ligandPart>
        <name>Fe</name>
        <dbReference type="ChEBI" id="CHEBI:18248"/>
    </ligandPart>
</feature>
<feature type="binding site" description="axial binding residue" evidence="2">
    <location>
        <position position="97"/>
    </location>
    <ligand>
        <name>heme b</name>
        <dbReference type="ChEBI" id="CHEBI:60344"/>
        <label>b566</label>
    </ligand>
    <ligandPart>
        <name>Fe</name>
        <dbReference type="ChEBI" id="CHEBI:18248"/>
    </ligandPart>
</feature>
<feature type="binding site" description="axial binding residue" evidence="2">
    <location>
        <position position="182"/>
    </location>
    <ligand>
        <name>heme b</name>
        <dbReference type="ChEBI" id="CHEBI:60344"/>
        <label>b562</label>
    </ligand>
    <ligandPart>
        <name>Fe</name>
        <dbReference type="ChEBI" id="CHEBI:18248"/>
    </ligandPart>
</feature>
<feature type="binding site" description="axial binding residue" evidence="2">
    <location>
        <position position="196"/>
    </location>
    <ligand>
        <name>heme b</name>
        <dbReference type="ChEBI" id="CHEBI:60344"/>
        <label>b566</label>
    </ligand>
    <ligandPart>
        <name>Fe</name>
        <dbReference type="ChEBI" id="CHEBI:18248"/>
    </ligandPart>
</feature>
<feature type="binding site" evidence="2">
    <location>
        <position position="201"/>
    </location>
    <ligand>
        <name>a ubiquinone</name>
        <dbReference type="ChEBI" id="CHEBI:16389"/>
    </ligand>
</feature>
<feature type="sequence variant" description="In strain: Isolate 1.">
    <original>H</original>
    <variation>L</variation>
    <location>
        <position position="97"/>
    </location>
</feature>
<feature type="sequence variant" description="In strain: Isolate 3.">
    <original>F</original>
    <variation>S</variation>
    <location>
        <position position="121"/>
    </location>
</feature>
<feature type="sequence variant" description="In strain: Isolate 4.">
    <original>T</original>
    <variation>A</variation>
    <location>
        <position position="310"/>
    </location>
</feature>
<evidence type="ECO:0000250" key="1"/>
<evidence type="ECO:0000250" key="2">
    <source>
        <dbReference type="UniProtKB" id="P00157"/>
    </source>
</evidence>
<evidence type="ECO:0000255" key="3">
    <source>
        <dbReference type="PROSITE-ProRule" id="PRU00967"/>
    </source>
</evidence>
<evidence type="ECO:0000255" key="4">
    <source>
        <dbReference type="PROSITE-ProRule" id="PRU00968"/>
    </source>
</evidence>
<gene>
    <name type="primary">MT-CYB</name>
    <name type="synonym">COB</name>
    <name type="synonym">CYTB</name>
    <name type="synonym">MTCYB</name>
</gene>
<sequence>MTNIRKMHPLMKIMNSSFIDLPAPSNISSWWNFGSLLGACLAIQIITGLFLAMHYTADTATAFSSVTHICRDVNQGWIIRYIHANGASMFFMCLFIHVGRGMYYGSFTLSETWNIGIILLFTVMATAFMGYVLPWGQMSFWGATVITNLLSAIPYIGTSLVEWIWGGFSVDKATLTRFFAFHFILPFIITALVMVHLLFLHETGSNNPLGTTSDSDKIPFHPYYTIKDLLGLLFLLLLLMMLVLFSPDLLGDPDNYTPANPLITPPHIKPEWYFLFAYAILRSIPNKLGGVLALIMSILILAILPLLQTTKQRSMVFRPFSQIMFWTLTADLFTLTWIGGQPVEYPFVIIGQIASILYFSLILIIMPTVSLIENNMLKW</sequence>
<geneLocation type="mitochondrion"/>
<protein>
    <recommendedName>
        <fullName>Cytochrome b</fullName>
    </recommendedName>
    <alternativeName>
        <fullName>Complex III subunit 3</fullName>
    </alternativeName>
    <alternativeName>
        <fullName>Complex III subunit III</fullName>
    </alternativeName>
    <alternativeName>
        <fullName>Cytochrome b-c1 complex subunit 3</fullName>
    </alternativeName>
    <alternativeName>
        <fullName>Ubiquinol-cytochrome-c reductase complex cytochrome b subunit</fullName>
    </alternativeName>
</protein>
<dbReference type="EMBL" id="DQ093169">
    <property type="protein sequence ID" value="AAZ66753.1"/>
    <property type="molecule type" value="Genomic_DNA"/>
</dbReference>
<dbReference type="EMBL" id="DQ093170">
    <property type="protein sequence ID" value="AAZ66754.1"/>
    <property type="molecule type" value="Genomic_DNA"/>
</dbReference>
<dbReference type="EMBL" id="DQ093171">
    <property type="protein sequence ID" value="AAZ66755.1"/>
    <property type="molecule type" value="Genomic_DNA"/>
</dbReference>
<dbReference type="EMBL" id="DQ093172">
    <property type="protein sequence ID" value="AAZ66756.1"/>
    <property type="molecule type" value="Genomic_DNA"/>
</dbReference>
<dbReference type="SMR" id="Q3YLC2"/>
<dbReference type="GO" id="GO:0005743">
    <property type="term" value="C:mitochondrial inner membrane"/>
    <property type="evidence" value="ECO:0007669"/>
    <property type="project" value="UniProtKB-SubCell"/>
</dbReference>
<dbReference type="GO" id="GO:0045275">
    <property type="term" value="C:respiratory chain complex III"/>
    <property type="evidence" value="ECO:0007669"/>
    <property type="project" value="InterPro"/>
</dbReference>
<dbReference type="GO" id="GO:0046872">
    <property type="term" value="F:metal ion binding"/>
    <property type="evidence" value="ECO:0007669"/>
    <property type="project" value="UniProtKB-KW"/>
</dbReference>
<dbReference type="GO" id="GO:0008121">
    <property type="term" value="F:ubiquinol-cytochrome-c reductase activity"/>
    <property type="evidence" value="ECO:0007669"/>
    <property type="project" value="InterPro"/>
</dbReference>
<dbReference type="GO" id="GO:0006122">
    <property type="term" value="P:mitochondrial electron transport, ubiquinol to cytochrome c"/>
    <property type="evidence" value="ECO:0007669"/>
    <property type="project" value="TreeGrafter"/>
</dbReference>
<dbReference type="CDD" id="cd00290">
    <property type="entry name" value="cytochrome_b_C"/>
    <property type="match status" value="1"/>
</dbReference>
<dbReference type="CDD" id="cd00284">
    <property type="entry name" value="Cytochrome_b_N"/>
    <property type="match status" value="1"/>
</dbReference>
<dbReference type="FunFam" id="1.20.810.10:FF:000002">
    <property type="entry name" value="Cytochrome b"/>
    <property type="match status" value="1"/>
</dbReference>
<dbReference type="Gene3D" id="1.20.810.10">
    <property type="entry name" value="Cytochrome Bc1 Complex, Chain C"/>
    <property type="match status" value="1"/>
</dbReference>
<dbReference type="InterPro" id="IPR005798">
    <property type="entry name" value="Cyt_b/b6_C"/>
</dbReference>
<dbReference type="InterPro" id="IPR036150">
    <property type="entry name" value="Cyt_b/b6_C_sf"/>
</dbReference>
<dbReference type="InterPro" id="IPR005797">
    <property type="entry name" value="Cyt_b/b6_N"/>
</dbReference>
<dbReference type="InterPro" id="IPR027387">
    <property type="entry name" value="Cytb/b6-like_sf"/>
</dbReference>
<dbReference type="InterPro" id="IPR030689">
    <property type="entry name" value="Cytochrome_b"/>
</dbReference>
<dbReference type="InterPro" id="IPR048260">
    <property type="entry name" value="Cytochrome_b_C_euk/bac"/>
</dbReference>
<dbReference type="InterPro" id="IPR048259">
    <property type="entry name" value="Cytochrome_b_N_euk/bac"/>
</dbReference>
<dbReference type="InterPro" id="IPR016174">
    <property type="entry name" value="Di-haem_cyt_TM"/>
</dbReference>
<dbReference type="PANTHER" id="PTHR19271">
    <property type="entry name" value="CYTOCHROME B"/>
    <property type="match status" value="1"/>
</dbReference>
<dbReference type="PANTHER" id="PTHR19271:SF16">
    <property type="entry name" value="CYTOCHROME B"/>
    <property type="match status" value="1"/>
</dbReference>
<dbReference type="Pfam" id="PF00032">
    <property type="entry name" value="Cytochrom_B_C"/>
    <property type="match status" value="1"/>
</dbReference>
<dbReference type="Pfam" id="PF00033">
    <property type="entry name" value="Cytochrome_B"/>
    <property type="match status" value="1"/>
</dbReference>
<dbReference type="PIRSF" id="PIRSF038885">
    <property type="entry name" value="COB"/>
    <property type="match status" value="1"/>
</dbReference>
<dbReference type="SUPFAM" id="SSF81648">
    <property type="entry name" value="a domain/subunit of cytochrome bc1 complex (Ubiquinol-cytochrome c reductase)"/>
    <property type="match status" value="1"/>
</dbReference>
<dbReference type="SUPFAM" id="SSF81342">
    <property type="entry name" value="Transmembrane di-heme cytochromes"/>
    <property type="match status" value="1"/>
</dbReference>
<dbReference type="PROSITE" id="PS51003">
    <property type="entry name" value="CYTB_CTER"/>
    <property type="match status" value="1"/>
</dbReference>
<dbReference type="PROSITE" id="PS51002">
    <property type="entry name" value="CYTB_NTER"/>
    <property type="match status" value="1"/>
</dbReference>
<comment type="function">
    <text evidence="2">Component of the ubiquinol-cytochrome c reductase complex (complex III or cytochrome b-c1 complex) that is part of the mitochondrial respiratory chain. The b-c1 complex mediates electron transfer from ubiquinol to cytochrome c. Contributes to the generation of a proton gradient across the mitochondrial membrane that is then used for ATP synthesis.</text>
</comment>
<comment type="cofactor">
    <cofactor evidence="2">
        <name>heme b</name>
        <dbReference type="ChEBI" id="CHEBI:60344"/>
    </cofactor>
    <text evidence="2">Binds 2 heme b groups non-covalently.</text>
</comment>
<comment type="subunit">
    <text evidence="2">The cytochrome bc1 complex contains 11 subunits: 3 respiratory subunits (MT-CYB, CYC1 and UQCRFS1), 2 core proteins (UQCRC1 and UQCRC2) and 6 low-molecular weight proteins (UQCRH/QCR6, UQCRB/QCR7, UQCRQ/QCR8, UQCR10/QCR9, UQCR11/QCR10 and a cleavage product of UQCRFS1). This cytochrome bc1 complex then forms a dimer.</text>
</comment>
<comment type="subcellular location">
    <subcellularLocation>
        <location evidence="2">Mitochondrion inner membrane</location>
        <topology evidence="2">Multi-pass membrane protein</topology>
    </subcellularLocation>
</comment>
<comment type="miscellaneous">
    <text evidence="1">Heme 1 (or BL or b562) is low-potential and absorbs at about 562 nm, and heme 2 (or BH or b566) is high-potential and absorbs at about 566 nm.</text>
</comment>
<comment type="similarity">
    <text evidence="3 4">Belongs to the cytochrome b family.</text>
</comment>
<comment type="caution">
    <text evidence="2">The full-length protein contains only eight transmembrane helices, not nine as predicted by bioinformatics tools.</text>
</comment>
<name>CYB_MIRZA</name>
<reference key="1">
    <citation type="journal article" date="2005" name="Primate Rep.">
        <title>Morphology, behaviour and molecular evolution of giant mouse lemurs (Mirza spp.) Gray, 1879, with description of a new species.</title>
        <authorList>
            <person name="Kappeler P.M."/>
            <person name="Rasoloarison R.M."/>
            <person name="Razafimanantsoa L."/>
            <person name="Walter L."/>
            <person name="Roos C."/>
        </authorList>
    </citation>
    <scope>NUCLEOTIDE SEQUENCE [GENOMIC DNA]</scope>
    <source>
        <strain>Isolate 1</strain>
        <strain>Isolate 2</strain>
        <strain>Isolate 3</strain>
        <strain>Isolate 4</strain>
    </source>
</reference>